<gene>
    <name evidence="1" type="primary">rpsU</name>
    <name type="ordered locus">Sbal223_3166</name>
</gene>
<keyword id="KW-0687">Ribonucleoprotein</keyword>
<keyword id="KW-0689">Ribosomal protein</keyword>
<organism>
    <name type="scientific">Shewanella baltica (strain OS223)</name>
    <dbReference type="NCBI Taxonomy" id="407976"/>
    <lineage>
        <taxon>Bacteria</taxon>
        <taxon>Pseudomonadati</taxon>
        <taxon>Pseudomonadota</taxon>
        <taxon>Gammaproteobacteria</taxon>
        <taxon>Alteromonadales</taxon>
        <taxon>Shewanellaceae</taxon>
        <taxon>Shewanella</taxon>
    </lineage>
</organism>
<proteinExistence type="inferred from homology"/>
<name>RS21_SHEB2</name>
<feature type="chain" id="PRO_1000133487" description="Small ribosomal subunit protein bS21">
    <location>
        <begin position="1"/>
        <end position="71"/>
    </location>
</feature>
<sequence length="71" mass="8345">MPIIKVRENEPFDVALRRFKRSCEKAGILADVRAREFYEKPTTARKRAKAAAVKRLAKKLSRENARRVRLY</sequence>
<dbReference type="EMBL" id="CP001252">
    <property type="protein sequence ID" value="ACK47651.1"/>
    <property type="molecule type" value="Genomic_DNA"/>
</dbReference>
<dbReference type="RefSeq" id="WP_006080725.1">
    <property type="nucleotide sequence ID" value="NC_011663.1"/>
</dbReference>
<dbReference type="SMR" id="B8EBV6"/>
<dbReference type="GeneID" id="94729004"/>
<dbReference type="KEGG" id="sbp:Sbal223_3166"/>
<dbReference type="HOGENOM" id="CLU_159258_1_0_6"/>
<dbReference type="Proteomes" id="UP000002507">
    <property type="component" value="Chromosome"/>
</dbReference>
<dbReference type="GO" id="GO:1990904">
    <property type="term" value="C:ribonucleoprotein complex"/>
    <property type="evidence" value="ECO:0007669"/>
    <property type="project" value="UniProtKB-KW"/>
</dbReference>
<dbReference type="GO" id="GO:0005840">
    <property type="term" value="C:ribosome"/>
    <property type="evidence" value="ECO:0007669"/>
    <property type="project" value="UniProtKB-KW"/>
</dbReference>
<dbReference type="GO" id="GO:0003735">
    <property type="term" value="F:structural constituent of ribosome"/>
    <property type="evidence" value="ECO:0007669"/>
    <property type="project" value="InterPro"/>
</dbReference>
<dbReference type="GO" id="GO:0006412">
    <property type="term" value="P:translation"/>
    <property type="evidence" value="ECO:0007669"/>
    <property type="project" value="UniProtKB-UniRule"/>
</dbReference>
<dbReference type="Gene3D" id="1.20.5.1150">
    <property type="entry name" value="Ribosomal protein S8"/>
    <property type="match status" value="1"/>
</dbReference>
<dbReference type="HAMAP" id="MF_00358">
    <property type="entry name" value="Ribosomal_bS21"/>
    <property type="match status" value="1"/>
</dbReference>
<dbReference type="InterPro" id="IPR001911">
    <property type="entry name" value="Ribosomal_bS21"/>
</dbReference>
<dbReference type="InterPro" id="IPR018278">
    <property type="entry name" value="Ribosomal_bS21_CS"/>
</dbReference>
<dbReference type="InterPro" id="IPR038380">
    <property type="entry name" value="Ribosomal_bS21_sf"/>
</dbReference>
<dbReference type="NCBIfam" id="TIGR00030">
    <property type="entry name" value="S21p"/>
    <property type="match status" value="1"/>
</dbReference>
<dbReference type="PANTHER" id="PTHR21109">
    <property type="entry name" value="MITOCHONDRIAL 28S RIBOSOMAL PROTEIN S21"/>
    <property type="match status" value="1"/>
</dbReference>
<dbReference type="PANTHER" id="PTHR21109:SF22">
    <property type="entry name" value="SMALL RIBOSOMAL SUBUNIT PROTEIN BS21"/>
    <property type="match status" value="1"/>
</dbReference>
<dbReference type="Pfam" id="PF01165">
    <property type="entry name" value="Ribosomal_S21"/>
    <property type="match status" value="1"/>
</dbReference>
<dbReference type="PRINTS" id="PR00976">
    <property type="entry name" value="RIBOSOMALS21"/>
</dbReference>
<dbReference type="PROSITE" id="PS01181">
    <property type="entry name" value="RIBOSOMAL_S21"/>
    <property type="match status" value="1"/>
</dbReference>
<reference key="1">
    <citation type="submission" date="2008-12" db="EMBL/GenBank/DDBJ databases">
        <title>Complete sequence of chromosome of Shewanella baltica OS223.</title>
        <authorList>
            <consortium name="US DOE Joint Genome Institute"/>
            <person name="Lucas S."/>
            <person name="Copeland A."/>
            <person name="Lapidus A."/>
            <person name="Glavina del Rio T."/>
            <person name="Dalin E."/>
            <person name="Tice H."/>
            <person name="Bruce D."/>
            <person name="Goodwin L."/>
            <person name="Pitluck S."/>
            <person name="Chertkov O."/>
            <person name="Meincke L."/>
            <person name="Brettin T."/>
            <person name="Detter J.C."/>
            <person name="Han C."/>
            <person name="Kuske C.R."/>
            <person name="Larimer F."/>
            <person name="Land M."/>
            <person name="Hauser L."/>
            <person name="Kyrpides N."/>
            <person name="Ovchinnikova G."/>
            <person name="Brettar I."/>
            <person name="Rodrigues J."/>
            <person name="Konstantinidis K."/>
            <person name="Tiedje J."/>
        </authorList>
    </citation>
    <scope>NUCLEOTIDE SEQUENCE [LARGE SCALE GENOMIC DNA]</scope>
    <source>
        <strain>OS223</strain>
    </source>
</reference>
<comment type="similarity">
    <text evidence="1">Belongs to the bacterial ribosomal protein bS21 family.</text>
</comment>
<protein>
    <recommendedName>
        <fullName evidence="1">Small ribosomal subunit protein bS21</fullName>
    </recommendedName>
    <alternativeName>
        <fullName evidence="2">30S ribosomal protein S21</fullName>
    </alternativeName>
</protein>
<evidence type="ECO:0000255" key="1">
    <source>
        <dbReference type="HAMAP-Rule" id="MF_00358"/>
    </source>
</evidence>
<evidence type="ECO:0000305" key="2"/>
<accession>B8EBV6</accession>